<comment type="function">
    <text evidence="1">Catalyzes the reversible isomerization of glucose-6-phosphate to fructose-6-phosphate.</text>
</comment>
<comment type="catalytic activity">
    <reaction evidence="1">
        <text>alpha-D-glucose 6-phosphate = beta-D-fructose 6-phosphate</text>
        <dbReference type="Rhea" id="RHEA:11816"/>
        <dbReference type="ChEBI" id="CHEBI:57634"/>
        <dbReference type="ChEBI" id="CHEBI:58225"/>
        <dbReference type="EC" id="5.3.1.9"/>
    </reaction>
</comment>
<comment type="pathway">
    <text evidence="1">Carbohydrate biosynthesis; gluconeogenesis.</text>
</comment>
<comment type="pathway">
    <text evidence="1">Carbohydrate degradation; glycolysis; D-glyceraldehyde 3-phosphate and glycerone phosphate from D-glucose: step 2/4.</text>
</comment>
<comment type="subcellular location">
    <subcellularLocation>
        <location evidence="1">Cytoplasm</location>
    </subcellularLocation>
</comment>
<comment type="similarity">
    <text evidence="1 2">Belongs to the GPI family.</text>
</comment>
<proteinExistence type="inferred from homology"/>
<accession>Q9ZK49</accession>
<keyword id="KW-0963">Cytoplasm</keyword>
<keyword id="KW-0312">Gluconeogenesis</keyword>
<keyword id="KW-0324">Glycolysis</keyword>
<keyword id="KW-0413">Isomerase</keyword>
<organism>
    <name type="scientific">Helicobacter pylori (strain J99 / ATCC 700824)</name>
    <name type="common">Campylobacter pylori J99</name>
    <dbReference type="NCBI Taxonomy" id="85963"/>
    <lineage>
        <taxon>Bacteria</taxon>
        <taxon>Pseudomonadati</taxon>
        <taxon>Campylobacterota</taxon>
        <taxon>Epsilonproteobacteria</taxon>
        <taxon>Campylobacterales</taxon>
        <taxon>Helicobacteraceae</taxon>
        <taxon>Helicobacter</taxon>
    </lineage>
</organism>
<reference key="1">
    <citation type="journal article" date="1999" name="Nature">
        <title>Genomic sequence comparison of two unrelated isolates of the human gastric pathogen Helicobacter pylori.</title>
        <authorList>
            <person name="Alm R.A."/>
            <person name="Ling L.-S.L."/>
            <person name="Moir D.T."/>
            <person name="King B.L."/>
            <person name="Brown E.D."/>
            <person name="Doig P.C."/>
            <person name="Smith D.R."/>
            <person name="Noonan B."/>
            <person name="Guild B.C."/>
            <person name="deJonge B.L."/>
            <person name="Carmel G."/>
            <person name="Tummino P.J."/>
            <person name="Caruso A."/>
            <person name="Uria-Nickelsen M."/>
            <person name="Mills D.M."/>
            <person name="Ives C."/>
            <person name="Gibson R."/>
            <person name="Merberg D."/>
            <person name="Mills S.D."/>
            <person name="Jiang Q."/>
            <person name="Taylor D.E."/>
            <person name="Vovis G.F."/>
            <person name="Trust T.J."/>
        </authorList>
    </citation>
    <scope>NUCLEOTIDE SEQUENCE [LARGE SCALE GENOMIC DNA]</scope>
    <source>
        <strain>J99 / ATCC 700824</strain>
    </source>
</reference>
<evidence type="ECO:0000255" key="1">
    <source>
        <dbReference type="HAMAP-Rule" id="MF_00473"/>
    </source>
</evidence>
<evidence type="ECO:0000305" key="2"/>
<dbReference type="EC" id="5.3.1.9" evidence="1"/>
<dbReference type="EMBL" id="AE001439">
    <property type="protein sequence ID" value="AAD06664.1"/>
    <property type="molecule type" value="Genomic_DNA"/>
</dbReference>
<dbReference type="PIR" id="E71851">
    <property type="entry name" value="E71851"/>
</dbReference>
<dbReference type="RefSeq" id="WP_000957659.1">
    <property type="nucleotide sequence ID" value="NC_000921.1"/>
</dbReference>
<dbReference type="SMR" id="Q9ZK49"/>
<dbReference type="KEGG" id="hpj:jhp_1093"/>
<dbReference type="PATRIC" id="fig|85963.30.peg.1489"/>
<dbReference type="eggNOG" id="COG0166">
    <property type="taxonomic scope" value="Bacteria"/>
</dbReference>
<dbReference type="UniPathway" id="UPA00109">
    <property type="reaction ID" value="UER00181"/>
</dbReference>
<dbReference type="UniPathway" id="UPA00138"/>
<dbReference type="Proteomes" id="UP000000804">
    <property type="component" value="Chromosome"/>
</dbReference>
<dbReference type="GO" id="GO:0005829">
    <property type="term" value="C:cytosol"/>
    <property type="evidence" value="ECO:0007669"/>
    <property type="project" value="TreeGrafter"/>
</dbReference>
<dbReference type="GO" id="GO:0097367">
    <property type="term" value="F:carbohydrate derivative binding"/>
    <property type="evidence" value="ECO:0007669"/>
    <property type="project" value="InterPro"/>
</dbReference>
<dbReference type="GO" id="GO:0004347">
    <property type="term" value="F:glucose-6-phosphate isomerase activity"/>
    <property type="evidence" value="ECO:0007669"/>
    <property type="project" value="UniProtKB-UniRule"/>
</dbReference>
<dbReference type="GO" id="GO:0048029">
    <property type="term" value="F:monosaccharide binding"/>
    <property type="evidence" value="ECO:0007669"/>
    <property type="project" value="TreeGrafter"/>
</dbReference>
<dbReference type="GO" id="GO:0006094">
    <property type="term" value="P:gluconeogenesis"/>
    <property type="evidence" value="ECO:0007669"/>
    <property type="project" value="UniProtKB-UniRule"/>
</dbReference>
<dbReference type="GO" id="GO:0051156">
    <property type="term" value="P:glucose 6-phosphate metabolic process"/>
    <property type="evidence" value="ECO:0007669"/>
    <property type="project" value="TreeGrafter"/>
</dbReference>
<dbReference type="GO" id="GO:0006096">
    <property type="term" value="P:glycolytic process"/>
    <property type="evidence" value="ECO:0007669"/>
    <property type="project" value="UniProtKB-UniRule"/>
</dbReference>
<dbReference type="CDD" id="cd05015">
    <property type="entry name" value="SIS_PGI_1"/>
    <property type="match status" value="1"/>
</dbReference>
<dbReference type="CDD" id="cd05016">
    <property type="entry name" value="SIS_PGI_2"/>
    <property type="match status" value="1"/>
</dbReference>
<dbReference type="FunFam" id="3.40.50.10490:FF:000018">
    <property type="entry name" value="Glucose-6-phosphate isomerase"/>
    <property type="match status" value="1"/>
</dbReference>
<dbReference type="Gene3D" id="1.10.1390.10">
    <property type="match status" value="1"/>
</dbReference>
<dbReference type="Gene3D" id="3.40.50.10490">
    <property type="entry name" value="Glucose-6-phosphate isomerase like protein, domain 1"/>
    <property type="match status" value="2"/>
</dbReference>
<dbReference type="HAMAP" id="MF_00473">
    <property type="entry name" value="G6P_isomerase"/>
    <property type="match status" value="1"/>
</dbReference>
<dbReference type="InterPro" id="IPR001672">
    <property type="entry name" value="G6P_Isomerase"/>
</dbReference>
<dbReference type="InterPro" id="IPR023096">
    <property type="entry name" value="G6P_Isomerase_C"/>
</dbReference>
<dbReference type="InterPro" id="IPR018189">
    <property type="entry name" value="Phosphoglucose_isomerase_CS"/>
</dbReference>
<dbReference type="InterPro" id="IPR046348">
    <property type="entry name" value="SIS_dom_sf"/>
</dbReference>
<dbReference type="InterPro" id="IPR035476">
    <property type="entry name" value="SIS_PGI_1"/>
</dbReference>
<dbReference type="InterPro" id="IPR035482">
    <property type="entry name" value="SIS_PGI_2"/>
</dbReference>
<dbReference type="NCBIfam" id="NF001211">
    <property type="entry name" value="PRK00179.1"/>
    <property type="match status" value="1"/>
</dbReference>
<dbReference type="PANTHER" id="PTHR11469">
    <property type="entry name" value="GLUCOSE-6-PHOSPHATE ISOMERASE"/>
    <property type="match status" value="1"/>
</dbReference>
<dbReference type="PANTHER" id="PTHR11469:SF1">
    <property type="entry name" value="GLUCOSE-6-PHOSPHATE ISOMERASE"/>
    <property type="match status" value="1"/>
</dbReference>
<dbReference type="Pfam" id="PF00342">
    <property type="entry name" value="PGI"/>
    <property type="match status" value="1"/>
</dbReference>
<dbReference type="PRINTS" id="PR00662">
    <property type="entry name" value="G6PISOMERASE"/>
</dbReference>
<dbReference type="SUPFAM" id="SSF53697">
    <property type="entry name" value="SIS domain"/>
    <property type="match status" value="1"/>
</dbReference>
<dbReference type="PROSITE" id="PS00765">
    <property type="entry name" value="P_GLUCOSE_ISOMERASE_1"/>
    <property type="match status" value="1"/>
</dbReference>
<dbReference type="PROSITE" id="PS00174">
    <property type="entry name" value="P_GLUCOSE_ISOMERASE_2"/>
    <property type="match status" value="1"/>
</dbReference>
<dbReference type="PROSITE" id="PS51463">
    <property type="entry name" value="P_GLUCOSE_ISOMERASE_3"/>
    <property type="match status" value="1"/>
</dbReference>
<feature type="chain" id="PRO_0000180653" description="Glucose-6-phosphate isomerase">
    <location>
        <begin position="1"/>
        <end position="545"/>
    </location>
</feature>
<feature type="active site" description="Proton donor" evidence="1">
    <location>
        <position position="351"/>
    </location>
</feature>
<feature type="active site" evidence="1">
    <location>
        <position position="382"/>
    </location>
</feature>
<feature type="active site" evidence="1">
    <location>
        <position position="510"/>
    </location>
</feature>
<name>G6PI_HELPJ</name>
<sequence length="545" mass="62303">MLTQLKTYPKLLKHYEEIKEVHMRDWFSKDKERASRYFVQLESLSLDYSKNRLNDTTLKLLFELAKDCSLKEKIEAMFKGEKINTTEKRAVLHTALRSLNDAEILLDNMEVLKSVRSVLKRMRAFSDSVRSGKRLGYTNQVITDIVNIGIGGSDLGALMVCTALKRYGHPRLKMHFVSNVDGTQILDVLEKINPASTLFIVASKTFSTQETLTNALTARKWFVERSGDEKHIAKHFVAVSTNKEAVQQFGIDEHNMFEFWDFVGGRYSLWSAIGLSIMIYLGKKNFNALLKGAYLMDEHFRNAPFESNLPVLMGLIGVWYINFFQSKSHLIAPYDQYLRHFPKFIQQLDMESNGKRISKKGEIIPYDTCPVVWGDMGINAQHAFFQLLHQGTHLIPIDFIASLDKKPNAKGHHEILFSNVLAQAQAFMKGKSYEEALGELLSKGLDKDEAKDLAHHRVFFGNRPSNILLLEKISPSNIGALVALYEHKVFVQGVIWDINSFDQWGVELGKELAVPILQELEGHKSNAYFDSSTRHLIELYKNYNQ</sequence>
<protein>
    <recommendedName>
        <fullName evidence="1">Glucose-6-phosphate isomerase</fullName>
        <shortName evidence="1">GPI</shortName>
        <ecNumber evidence="1">5.3.1.9</ecNumber>
    </recommendedName>
    <alternativeName>
        <fullName evidence="1">Phosphoglucose isomerase</fullName>
        <shortName evidence="1">PGI</shortName>
    </alternativeName>
    <alternativeName>
        <fullName evidence="1">Phosphohexose isomerase</fullName>
        <shortName evidence="1">PHI</shortName>
    </alternativeName>
</protein>
<gene>
    <name evidence="1" type="primary">pgi</name>
    <name type="ordered locus">jhp_1093</name>
</gene>